<protein>
    <recommendedName>
        <fullName evidence="1">Probable transcriptional regulatory protein RHA1_ro06891</fullName>
    </recommendedName>
</protein>
<feature type="chain" id="PRO_0000257115" description="Probable transcriptional regulatory protein RHA1_ro06891">
    <location>
        <begin position="1"/>
        <end position="250"/>
    </location>
</feature>
<sequence>MSGHSKWATTKHKKAVIDAKRGKAFAKLIKNIEVAARTGGGDPAGNPTLYDAIQKAKKTSVPNDNIERARKRGAGEEAGGADWQTIMYEGYGPNGVAVLIECLTDNRNRAAGEVRTAMTRNGGNMADPGSVSYLFTRKGVVTLEKGDQSEDDVLMAVLDAGAEEVTDLGDTFEIVSEPTDLVAVRSALQEAGIDYDSAEADFRASVEVPVDADGARKVFKLVDALEESDDVQNVYTNVDLSDEVLAELDD</sequence>
<evidence type="ECO:0000255" key="1">
    <source>
        <dbReference type="HAMAP-Rule" id="MF_00693"/>
    </source>
</evidence>
<evidence type="ECO:0000305" key="2"/>
<keyword id="KW-0963">Cytoplasm</keyword>
<keyword id="KW-0238">DNA-binding</keyword>
<keyword id="KW-0804">Transcription</keyword>
<keyword id="KW-0805">Transcription regulation</keyword>
<accession>Q0S1C9</accession>
<organism>
    <name type="scientific">Rhodococcus jostii (strain RHA1)</name>
    <dbReference type="NCBI Taxonomy" id="101510"/>
    <lineage>
        <taxon>Bacteria</taxon>
        <taxon>Bacillati</taxon>
        <taxon>Actinomycetota</taxon>
        <taxon>Actinomycetes</taxon>
        <taxon>Mycobacteriales</taxon>
        <taxon>Nocardiaceae</taxon>
        <taxon>Rhodococcus</taxon>
    </lineage>
</organism>
<comment type="subcellular location">
    <subcellularLocation>
        <location evidence="1">Cytoplasm</location>
    </subcellularLocation>
</comment>
<comment type="similarity">
    <text evidence="1">Belongs to the TACO1 family.</text>
</comment>
<comment type="sequence caution" evidence="2">
    <conflict type="erroneous initiation">
        <sequence resource="EMBL-CDS" id="ABG98657"/>
    </conflict>
</comment>
<name>Y6891_RHOJR</name>
<gene>
    <name type="ordered locus">RHA1_ro06891</name>
</gene>
<dbReference type="EMBL" id="CP000431">
    <property type="protein sequence ID" value="ABG98657.1"/>
    <property type="status" value="ALT_INIT"/>
    <property type="molecule type" value="Genomic_DNA"/>
</dbReference>
<dbReference type="RefSeq" id="WP_011598635.1">
    <property type="nucleotide sequence ID" value="NC_008268.1"/>
</dbReference>
<dbReference type="SMR" id="Q0S1C9"/>
<dbReference type="KEGG" id="rha:RHA1_ro06891"/>
<dbReference type="eggNOG" id="COG0217">
    <property type="taxonomic scope" value="Bacteria"/>
</dbReference>
<dbReference type="HOGENOM" id="CLU_062974_2_2_11"/>
<dbReference type="OrthoDB" id="9781053at2"/>
<dbReference type="Proteomes" id="UP000008710">
    <property type="component" value="Chromosome"/>
</dbReference>
<dbReference type="GO" id="GO:0005829">
    <property type="term" value="C:cytosol"/>
    <property type="evidence" value="ECO:0007669"/>
    <property type="project" value="TreeGrafter"/>
</dbReference>
<dbReference type="GO" id="GO:0003677">
    <property type="term" value="F:DNA binding"/>
    <property type="evidence" value="ECO:0007669"/>
    <property type="project" value="UniProtKB-UniRule"/>
</dbReference>
<dbReference type="GO" id="GO:0006355">
    <property type="term" value="P:regulation of DNA-templated transcription"/>
    <property type="evidence" value="ECO:0007669"/>
    <property type="project" value="UniProtKB-UniRule"/>
</dbReference>
<dbReference type="FunFam" id="1.10.10.200:FF:000002">
    <property type="entry name" value="Probable transcriptional regulatory protein CLM62_37755"/>
    <property type="match status" value="1"/>
</dbReference>
<dbReference type="Gene3D" id="1.10.10.200">
    <property type="match status" value="1"/>
</dbReference>
<dbReference type="Gene3D" id="3.30.70.980">
    <property type="match status" value="2"/>
</dbReference>
<dbReference type="HAMAP" id="MF_00693">
    <property type="entry name" value="Transcrip_reg_TACO1"/>
    <property type="match status" value="1"/>
</dbReference>
<dbReference type="InterPro" id="IPR017856">
    <property type="entry name" value="Integrase-like_N"/>
</dbReference>
<dbReference type="InterPro" id="IPR048300">
    <property type="entry name" value="TACO1_YebC-like_2nd/3rd_dom"/>
</dbReference>
<dbReference type="InterPro" id="IPR049083">
    <property type="entry name" value="TACO1_YebC_N"/>
</dbReference>
<dbReference type="InterPro" id="IPR002876">
    <property type="entry name" value="Transcrip_reg_TACO1-like"/>
</dbReference>
<dbReference type="InterPro" id="IPR026564">
    <property type="entry name" value="Transcrip_reg_TACO1-like_dom3"/>
</dbReference>
<dbReference type="InterPro" id="IPR029072">
    <property type="entry name" value="YebC-like"/>
</dbReference>
<dbReference type="NCBIfam" id="NF001030">
    <property type="entry name" value="PRK00110.1"/>
    <property type="match status" value="1"/>
</dbReference>
<dbReference type="NCBIfam" id="NF009044">
    <property type="entry name" value="PRK12378.1"/>
    <property type="match status" value="1"/>
</dbReference>
<dbReference type="NCBIfam" id="TIGR01033">
    <property type="entry name" value="YebC/PmpR family DNA-binding transcriptional regulator"/>
    <property type="match status" value="1"/>
</dbReference>
<dbReference type="PANTHER" id="PTHR12532:SF6">
    <property type="entry name" value="TRANSCRIPTIONAL REGULATORY PROTEIN YEBC-RELATED"/>
    <property type="match status" value="1"/>
</dbReference>
<dbReference type="PANTHER" id="PTHR12532">
    <property type="entry name" value="TRANSLATIONAL ACTIVATOR OF CYTOCHROME C OXIDASE 1"/>
    <property type="match status" value="1"/>
</dbReference>
<dbReference type="Pfam" id="PF20772">
    <property type="entry name" value="TACO1_YebC_N"/>
    <property type="match status" value="1"/>
</dbReference>
<dbReference type="Pfam" id="PF01709">
    <property type="entry name" value="Transcrip_reg"/>
    <property type="match status" value="1"/>
</dbReference>
<dbReference type="SUPFAM" id="SSF75625">
    <property type="entry name" value="YebC-like"/>
    <property type="match status" value="1"/>
</dbReference>
<reference key="1">
    <citation type="journal article" date="2006" name="Proc. Natl. Acad. Sci. U.S.A.">
        <title>The complete genome of Rhodococcus sp. RHA1 provides insights into a catabolic powerhouse.</title>
        <authorList>
            <person name="McLeod M.P."/>
            <person name="Warren R.L."/>
            <person name="Hsiao W.W.L."/>
            <person name="Araki N."/>
            <person name="Myhre M."/>
            <person name="Fernandes C."/>
            <person name="Miyazawa D."/>
            <person name="Wong W."/>
            <person name="Lillquist A.L."/>
            <person name="Wang D."/>
            <person name="Dosanjh M."/>
            <person name="Hara H."/>
            <person name="Petrescu A."/>
            <person name="Morin R.D."/>
            <person name="Yang G."/>
            <person name="Stott J.M."/>
            <person name="Schein J.E."/>
            <person name="Shin H."/>
            <person name="Smailus D."/>
            <person name="Siddiqui A.S."/>
            <person name="Marra M.A."/>
            <person name="Jones S.J.M."/>
            <person name="Holt R."/>
            <person name="Brinkman F.S.L."/>
            <person name="Miyauchi K."/>
            <person name="Fukuda M."/>
            <person name="Davies J.E."/>
            <person name="Mohn W.W."/>
            <person name="Eltis L.D."/>
        </authorList>
    </citation>
    <scope>NUCLEOTIDE SEQUENCE [LARGE SCALE GENOMIC DNA]</scope>
    <source>
        <strain>RHA1</strain>
    </source>
</reference>
<proteinExistence type="inferred from homology"/>